<evidence type="ECO:0000255" key="1">
    <source>
        <dbReference type="HAMAP-Rule" id="MF_00054"/>
    </source>
</evidence>
<evidence type="ECO:0000305" key="2"/>
<proteinExistence type="inferred from homology"/>
<organism>
    <name type="scientific">Aster yellows witches'-broom phytoplasma (strain AYWB)</name>
    <dbReference type="NCBI Taxonomy" id="322098"/>
    <lineage>
        <taxon>Bacteria</taxon>
        <taxon>Bacillati</taxon>
        <taxon>Mycoplasmatota</taxon>
        <taxon>Mollicutes</taxon>
        <taxon>Acholeplasmatales</taxon>
        <taxon>Acholeplasmataceae</taxon>
        <taxon>Candidatus Phytoplasma</taxon>
        <taxon>16SrI (Aster yellows group)</taxon>
    </lineage>
</organism>
<dbReference type="EMBL" id="CP000061">
    <property type="protein sequence ID" value="ABC65574.1"/>
    <property type="status" value="ALT_INIT"/>
    <property type="molecule type" value="Genomic_DNA"/>
</dbReference>
<dbReference type="RefSeq" id="WP_041639868.1">
    <property type="nucleotide sequence ID" value="NC_007716.1"/>
</dbReference>
<dbReference type="SMR" id="Q2NJ19"/>
<dbReference type="STRING" id="322098.AYWB_457"/>
<dbReference type="KEGG" id="ayw:AYWB_457"/>
<dbReference type="eggNOG" id="COG0480">
    <property type="taxonomic scope" value="Bacteria"/>
</dbReference>
<dbReference type="HOGENOM" id="CLU_002794_4_1_14"/>
<dbReference type="OrthoDB" id="9804431at2"/>
<dbReference type="Proteomes" id="UP000001934">
    <property type="component" value="Chromosome"/>
</dbReference>
<dbReference type="GO" id="GO:0005737">
    <property type="term" value="C:cytoplasm"/>
    <property type="evidence" value="ECO:0007669"/>
    <property type="project" value="UniProtKB-SubCell"/>
</dbReference>
<dbReference type="GO" id="GO:0005525">
    <property type="term" value="F:GTP binding"/>
    <property type="evidence" value="ECO:0007669"/>
    <property type="project" value="UniProtKB-UniRule"/>
</dbReference>
<dbReference type="GO" id="GO:0003924">
    <property type="term" value="F:GTPase activity"/>
    <property type="evidence" value="ECO:0007669"/>
    <property type="project" value="InterPro"/>
</dbReference>
<dbReference type="GO" id="GO:0003746">
    <property type="term" value="F:translation elongation factor activity"/>
    <property type="evidence" value="ECO:0007669"/>
    <property type="project" value="UniProtKB-UniRule"/>
</dbReference>
<dbReference type="GO" id="GO:0032790">
    <property type="term" value="P:ribosome disassembly"/>
    <property type="evidence" value="ECO:0007669"/>
    <property type="project" value="TreeGrafter"/>
</dbReference>
<dbReference type="CDD" id="cd01886">
    <property type="entry name" value="EF-G"/>
    <property type="match status" value="1"/>
</dbReference>
<dbReference type="CDD" id="cd16262">
    <property type="entry name" value="EFG_III"/>
    <property type="match status" value="1"/>
</dbReference>
<dbReference type="CDD" id="cd01434">
    <property type="entry name" value="EFG_mtEFG1_IV"/>
    <property type="match status" value="1"/>
</dbReference>
<dbReference type="CDD" id="cd03713">
    <property type="entry name" value="EFG_mtEFG_C"/>
    <property type="match status" value="1"/>
</dbReference>
<dbReference type="CDD" id="cd04088">
    <property type="entry name" value="EFG_mtEFG_II"/>
    <property type="match status" value="1"/>
</dbReference>
<dbReference type="FunFam" id="2.40.30.10:FF:000006">
    <property type="entry name" value="Elongation factor G"/>
    <property type="match status" value="1"/>
</dbReference>
<dbReference type="FunFam" id="3.30.230.10:FF:000003">
    <property type="entry name" value="Elongation factor G"/>
    <property type="match status" value="1"/>
</dbReference>
<dbReference type="FunFam" id="3.30.70.240:FF:000001">
    <property type="entry name" value="Elongation factor G"/>
    <property type="match status" value="1"/>
</dbReference>
<dbReference type="FunFam" id="3.30.70.870:FF:000001">
    <property type="entry name" value="Elongation factor G"/>
    <property type="match status" value="1"/>
</dbReference>
<dbReference type="FunFam" id="3.40.50.300:FF:000029">
    <property type="entry name" value="Elongation factor G"/>
    <property type="match status" value="1"/>
</dbReference>
<dbReference type="Gene3D" id="3.30.230.10">
    <property type="match status" value="1"/>
</dbReference>
<dbReference type="Gene3D" id="3.30.70.240">
    <property type="match status" value="1"/>
</dbReference>
<dbReference type="Gene3D" id="3.30.70.870">
    <property type="entry name" value="Elongation Factor G (Translational Gtpase), domain 3"/>
    <property type="match status" value="1"/>
</dbReference>
<dbReference type="Gene3D" id="3.40.50.300">
    <property type="entry name" value="P-loop containing nucleotide triphosphate hydrolases"/>
    <property type="match status" value="1"/>
</dbReference>
<dbReference type="Gene3D" id="2.40.30.10">
    <property type="entry name" value="Translation factors"/>
    <property type="match status" value="1"/>
</dbReference>
<dbReference type="HAMAP" id="MF_00054_B">
    <property type="entry name" value="EF_G_EF_2_B"/>
    <property type="match status" value="1"/>
</dbReference>
<dbReference type="InterPro" id="IPR053905">
    <property type="entry name" value="EF-G-like_DII"/>
</dbReference>
<dbReference type="InterPro" id="IPR041095">
    <property type="entry name" value="EFG_II"/>
</dbReference>
<dbReference type="InterPro" id="IPR009022">
    <property type="entry name" value="EFG_III"/>
</dbReference>
<dbReference type="InterPro" id="IPR035647">
    <property type="entry name" value="EFG_III/V"/>
</dbReference>
<dbReference type="InterPro" id="IPR047872">
    <property type="entry name" value="EFG_IV"/>
</dbReference>
<dbReference type="InterPro" id="IPR035649">
    <property type="entry name" value="EFG_V"/>
</dbReference>
<dbReference type="InterPro" id="IPR000640">
    <property type="entry name" value="EFG_V-like"/>
</dbReference>
<dbReference type="InterPro" id="IPR031157">
    <property type="entry name" value="G_TR_CS"/>
</dbReference>
<dbReference type="InterPro" id="IPR027417">
    <property type="entry name" value="P-loop_NTPase"/>
</dbReference>
<dbReference type="InterPro" id="IPR020568">
    <property type="entry name" value="Ribosomal_Su5_D2-typ_SF"/>
</dbReference>
<dbReference type="InterPro" id="IPR014721">
    <property type="entry name" value="Ribsml_uS5_D2-typ_fold_subgr"/>
</dbReference>
<dbReference type="InterPro" id="IPR005225">
    <property type="entry name" value="Small_GTP-bd"/>
</dbReference>
<dbReference type="InterPro" id="IPR000795">
    <property type="entry name" value="T_Tr_GTP-bd_dom"/>
</dbReference>
<dbReference type="InterPro" id="IPR009000">
    <property type="entry name" value="Transl_B-barrel_sf"/>
</dbReference>
<dbReference type="InterPro" id="IPR004540">
    <property type="entry name" value="Transl_elong_EFG/EF2"/>
</dbReference>
<dbReference type="InterPro" id="IPR005517">
    <property type="entry name" value="Transl_elong_EFG/EF2_IV"/>
</dbReference>
<dbReference type="NCBIfam" id="TIGR00484">
    <property type="entry name" value="EF-G"/>
    <property type="match status" value="1"/>
</dbReference>
<dbReference type="NCBIfam" id="NF009379">
    <property type="entry name" value="PRK12740.1-3"/>
    <property type="match status" value="1"/>
</dbReference>
<dbReference type="NCBIfam" id="NF009381">
    <property type="entry name" value="PRK12740.1-5"/>
    <property type="match status" value="1"/>
</dbReference>
<dbReference type="NCBIfam" id="TIGR00231">
    <property type="entry name" value="small_GTP"/>
    <property type="match status" value="1"/>
</dbReference>
<dbReference type="PANTHER" id="PTHR43261:SF1">
    <property type="entry name" value="RIBOSOME-RELEASING FACTOR 2, MITOCHONDRIAL"/>
    <property type="match status" value="1"/>
</dbReference>
<dbReference type="PANTHER" id="PTHR43261">
    <property type="entry name" value="TRANSLATION ELONGATION FACTOR G-RELATED"/>
    <property type="match status" value="1"/>
</dbReference>
<dbReference type="Pfam" id="PF22042">
    <property type="entry name" value="EF-G_D2"/>
    <property type="match status" value="1"/>
</dbReference>
<dbReference type="Pfam" id="PF00679">
    <property type="entry name" value="EFG_C"/>
    <property type="match status" value="1"/>
</dbReference>
<dbReference type="Pfam" id="PF14492">
    <property type="entry name" value="EFG_III"/>
    <property type="match status" value="1"/>
</dbReference>
<dbReference type="Pfam" id="PF03764">
    <property type="entry name" value="EFG_IV"/>
    <property type="match status" value="1"/>
</dbReference>
<dbReference type="Pfam" id="PF00009">
    <property type="entry name" value="GTP_EFTU"/>
    <property type="match status" value="1"/>
</dbReference>
<dbReference type="PRINTS" id="PR00315">
    <property type="entry name" value="ELONGATNFCT"/>
</dbReference>
<dbReference type="SMART" id="SM00838">
    <property type="entry name" value="EFG_C"/>
    <property type="match status" value="1"/>
</dbReference>
<dbReference type="SMART" id="SM00889">
    <property type="entry name" value="EFG_IV"/>
    <property type="match status" value="1"/>
</dbReference>
<dbReference type="SUPFAM" id="SSF54980">
    <property type="entry name" value="EF-G C-terminal domain-like"/>
    <property type="match status" value="2"/>
</dbReference>
<dbReference type="SUPFAM" id="SSF52540">
    <property type="entry name" value="P-loop containing nucleoside triphosphate hydrolases"/>
    <property type="match status" value="1"/>
</dbReference>
<dbReference type="SUPFAM" id="SSF54211">
    <property type="entry name" value="Ribosomal protein S5 domain 2-like"/>
    <property type="match status" value="1"/>
</dbReference>
<dbReference type="SUPFAM" id="SSF50447">
    <property type="entry name" value="Translation proteins"/>
    <property type="match status" value="1"/>
</dbReference>
<dbReference type="PROSITE" id="PS00301">
    <property type="entry name" value="G_TR_1"/>
    <property type="match status" value="1"/>
</dbReference>
<dbReference type="PROSITE" id="PS51722">
    <property type="entry name" value="G_TR_2"/>
    <property type="match status" value="1"/>
</dbReference>
<protein>
    <recommendedName>
        <fullName evidence="1">Elongation factor G</fullName>
        <shortName evidence="1">EF-G</shortName>
    </recommendedName>
</protein>
<name>EFG_AYWBP</name>
<reference key="1">
    <citation type="journal article" date="2006" name="J. Bacteriol.">
        <title>Living with genome instability: the adaptation of phytoplasmas to diverse environments of their insect and plant hosts.</title>
        <authorList>
            <person name="Bai X."/>
            <person name="Zhang J."/>
            <person name="Ewing A."/>
            <person name="Miller S.A."/>
            <person name="Jancso Radek A."/>
            <person name="Shevchenko D.V."/>
            <person name="Tsukerman K."/>
            <person name="Walunas T."/>
            <person name="Lapidus A."/>
            <person name="Campbell J.W."/>
            <person name="Hogenhout S.A."/>
        </authorList>
    </citation>
    <scope>NUCLEOTIDE SEQUENCE [LARGE SCALE GENOMIC DNA]</scope>
    <source>
        <strain>AYWB</strain>
    </source>
</reference>
<keyword id="KW-0963">Cytoplasm</keyword>
<keyword id="KW-0251">Elongation factor</keyword>
<keyword id="KW-0342">GTP-binding</keyword>
<keyword id="KW-0547">Nucleotide-binding</keyword>
<keyword id="KW-0648">Protein biosynthesis</keyword>
<feature type="chain" id="PRO_0000263426" description="Elongation factor G">
    <location>
        <begin position="1"/>
        <end position="688"/>
    </location>
</feature>
<feature type="domain" description="tr-type G">
    <location>
        <begin position="8"/>
        <end position="282"/>
    </location>
</feature>
<feature type="binding site" evidence="1">
    <location>
        <begin position="17"/>
        <end position="24"/>
    </location>
    <ligand>
        <name>GTP</name>
        <dbReference type="ChEBI" id="CHEBI:37565"/>
    </ligand>
</feature>
<feature type="binding site" evidence="1">
    <location>
        <begin position="81"/>
        <end position="85"/>
    </location>
    <ligand>
        <name>GTP</name>
        <dbReference type="ChEBI" id="CHEBI:37565"/>
    </ligand>
</feature>
<feature type="binding site" evidence="1">
    <location>
        <begin position="135"/>
        <end position="138"/>
    </location>
    <ligand>
        <name>GTP</name>
        <dbReference type="ChEBI" id="CHEBI:37565"/>
    </ligand>
</feature>
<gene>
    <name evidence="1" type="primary">fusA</name>
    <name type="ordered locus">AYWB_457</name>
</gene>
<sequence>MARQFSLEKTRNIGIIAHIDAGKTTTTERILFHTGKIHKIGETHDGASQMDWMEQEQERGITITSAATTAFWKNHRINIIDTPGHVDFTVEVSRSLRVLDGAVTVIDAQAGVEPQTETVWRQASEYKVPRVIFVNKMDKVGADFAYAIETLKQRLGVHASAIQWPIGSENDFNGIIDLVEMNAFEYDNTSQETGKVVSIPSDLESITQTKRKELIETLSTLDEELMIYYLEEKPISSEMLKNSIRKATLQASFFPVLCGSSFKNKGVVKMLDAVVDYLPAPCDVAAIVGFDSDNQEIVRTGLDEEPFTALAFKVMTDPYVGKLTFFRIYSGSVKAGSYVTNTTKGTKERFGRLLQMHANSREEVKEAYTGDILAVVGLKATTTGDTLASEGQTIILESMNFPEPVIEIAVEPKTKADQDKMGIALAKLAEEDPTFKVFSNHETGQTIIAGMGELHLDIIIERLKREFKVQANVTEPQVAYRETITQETETEGKFIRQSGGRGQYGHVWMRFEPNPGKGFEFVNKIVGGVVPREYVPAVQKGIQEALAGGILAGYQIIDVKATLFDGSYHDVDSSEIAFKIAASMALKETKTKGNPVILEPIMDVEVVTPNDYVGNVIGDLTSRRGRLENQESRTNAVAIRAFVPLSEMFGYATVLRSNTQGRATFIMQFAKYEKAPKSITEEIIKKRA</sequence>
<accession>Q2NJ19</accession>
<comment type="function">
    <text evidence="1">Catalyzes the GTP-dependent ribosomal translocation step during translation elongation. During this step, the ribosome changes from the pre-translocational (PRE) to the post-translocational (POST) state as the newly formed A-site-bound peptidyl-tRNA and P-site-bound deacylated tRNA move to the P and E sites, respectively. Catalyzes the coordinated movement of the two tRNA molecules, the mRNA and conformational changes in the ribosome.</text>
</comment>
<comment type="subcellular location">
    <subcellularLocation>
        <location evidence="1">Cytoplasm</location>
    </subcellularLocation>
</comment>
<comment type="similarity">
    <text evidence="1">Belongs to the TRAFAC class translation factor GTPase superfamily. Classic translation factor GTPase family. EF-G/EF-2 subfamily.</text>
</comment>
<comment type="sequence caution" evidence="2">
    <conflict type="erroneous initiation">
        <sequence resource="EMBL-CDS" id="ABC65574"/>
    </conflict>
</comment>